<protein>
    <recommendedName>
        <fullName>Xylulose-5-phosphate phosphoketolase</fullName>
        <ecNumber>4.1.2.9</ecNumber>
    </recommendedName>
</protein>
<feature type="initiator methionine" description="Removed" evidence="1">
    <location>
        <position position="1"/>
    </location>
</feature>
<feature type="chain" id="PRO_0000193868" description="Xylulose-5-phosphate phosphoketolase">
    <location>
        <begin position="2"/>
        <end position="788"/>
    </location>
</feature>
<dbReference type="EC" id="4.1.2.9"/>
<dbReference type="EMBL" id="AJ309011">
    <property type="protein sequence ID" value="CAC84393.1"/>
    <property type="molecule type" value="Genomic_DNA"/>
</dbReference>
<dbReference type="RefSeq" id="WP_050339622.1">
    <property type="nucleotide sequence ID" value="NZ_RIOZ01000047.1"/>
</dbReference>
<dbReference type="SMR" id="Q937F6"/>
<dbReference type="STRING" id="1589.GCA_001188985_02619"/>
<dbReference type="OrthoDB" id="9768449at2"/>
<dbReference type="BRENDA" id="4.1.2.9">
    <property type="organism ID" value="2886"/>
</dbReference>
<dbReference type="GO" id="GO:0050193">
    <property type="term" value="F:phosphoketolase activity"/>
    <property type="evidence" value="ECO:0007669"/>
    <property type="project" value="UniProtKB-EC"/>
</dbReference>
<dbReference type="GO" id="GO:0005975">
    <property type="term" value="P:carbohydrate metabolic process"/>
    <property type="evidence" value="ECO:0007669"/>
    <property type="project" value="InterPro"/>
</dbReference>
<dbReference type="CDD" id="cd02011">
    <property type="entry name" value="TPP_PK"/>
    <property type="match status" value="1"/>
</dbReference>
<dbReference type="Gene3D" id="3.40.50.920">
    <property type="match status" value="1"/>
</dbReference>
<dbReference type="Gene3D" id="3.40.50.970">
    <property type="match status" value="2"/>
</dbReference>
<dbReference type="HAMAP" id="MF_01403">
    <property type="entry name" value="Phosphoketolase"/>
    <property type="match status" value="1"/>
</dbReference>
<dbReference type="InterPro" id="IPR023962">
    <property type="entry name" value="Phosphoketolase"/>
</dbReference>
<dbReference type="InterPro" id="IPR029061">
    <property type="entry name" value="THDP-binding"/>
</dbReference>
<dbReference type="InterPro" id="IPR009014">
    <property type="entry name" value="Transketo_C/PFOR_II"/>
</dbReference>
<dbReference type="InterPro" id="IPR005593">
    <property type="entry name" value="Xul5P/Fru6P_PKetolase"/>
</dbReference>
<dbReference type="InterPro" id="IPR018969">
    <property type="entry name" value="Xul5P/Fru6P_PKetolase_C"/>
</dbReference>
<dbReference type="InterPro" id="IPR019790">
    <property type="entry name" value="Xul5P/Fru6P_PKetolase_CS"/>
</dbReference>
<dbReference type="InterPro" id="IPR018970">
    <property type="entry name" value="Xul5P/Fru6P_PKetolase_N"/>
</dbReference>
<dbReference type="InterPro" id="IPR019789">
    <property type="entry name" value="Xul5P/Fru6P_PKetolase_ThDP_BS"/>
</dbReference>
<dbReference type="NCBIfam" id="NF003618">
    <property type="entry name" value="PRK05261.1-3"/>
    <property type="match status" value="1"/>
</dbReference>
<dbReference type="NCBIfam" id="NF003619">
    <property type="entry name" value="PRK05261.1-4"/>
    <property type="match status" value="1"/>
</dbReference>
<dbReference type="PANTHER" id="PTHR31273">
    <property type="entry name" value="PHOSPHOKETOLASE-RELATED"/>
    <property type="match status" value="1"/>
</dbReference>
<dbReference type="PANTHER" id="PTHR31273:SF0">
    <property type="entry name" value="PHOSPHOKETOLASE-RELATED"/>
    <property type="match status" value="1"/>
</dbReference>
<dbReference type="Pfam" id="PF03894">
    <property type="entry name" value="XFP"/>
    <property type="match status" value="1"/>
</dbReference>
<dbReference type="Pfam" id="PF09363">
    <property type="entry name" value="XFP_C"/>
    <property type="match status" value="1"/>
</dbReference>
<dbReference type="Pfam" id="PF09364">
    <property type="entry name" value="XFP_N"/>
    <property type="match status" value="1"/>
</dbReference>
<dbReference type="PIRSF" id="PIRSF017245">
    <property type="entry name" value="Phosphoketolase"/>
    <property type="match status" value="1"/>
</dbReference>
<dbReference type="SUPFAM" id="SSF52518">
    <property type="entry name" value="Thiamin diphosphate-binding fold (THDP-binding)"/>
    <property type="match status" value="2"/>
</dbReference>
<dbReference type="PROSITE" id="PS60002">
    <property type="entry name" value="PHOSPHOKETOLASE_1"/>
    <property type="match status" value="1"/>
</dbReference>
<dbReference type="PROSITE" id="PS60003">
    <property type="entry name" value="PHOSPHOKETOLASE_2"/>
    <property type="match status" value="1"/>
</dbReference>
<gene>
    <name type="primary">xpkA</name>
</gene>
<name>XPKA_LACPE</name>
<comment type="catalytic activity">
    <reaction>
        <text>D-xylulose 5-phosphate + phosphate = acetyl phosphate + D-glyceraldehyde 3-phosphate + H2O</text>
        <dbReference type="Rhea" id="RHEA:10468"/>
        <dbReference type="ChEBI" id="CHEBI:15377"/>
        <dbReference type="ChEBI" id="CHEBI:22191"/>
        <dbReference type="ChEBI" id="CHEBI:43474"/>
        <dbReference type="ChEBI" id="CHEBI:57737"/>
        <dbReference type="ChEBI" id="CHEBI:59776"/>
        <dbReference type="EC" id="4.1.2.9"/>
    </reaction>
</comment>
<comment type="cofactor">
    <cofactor evidence="2">
        <name>thiamine diphosphate</name>
        <dbReference type="ChEBI" id="CHEBI:58937"/>
    </cofactor>
</comment>
<comment type="subunit">
    <text evidence="2">Homohexamer.</text>
</comment>
<comment type="induction">
    <text>Induced by sugars that are fermented by the phosphoketolase pathway (PKP) and repressed by glucose mediated by carbon catabolite protein A and by the mannose phosphoenolpyruvate phosphotransferase system.</text>
</comment>
<comment type="similarity">
    <text evidence="2">Belongs to the XFP family.</text>
</comment>
<organism>
    <name type="scientific">Lactiplantibacillus pentosus</name>
    <name type="common">Lactobacillus pentosus</name>
    <dbReference type="NCBI Taxonomy" id="1589"/>
    <lineage>
        <taxon>Bacteria</taxon>
        <taxon>Bacillati</taxon>
        <taxon>Bacillota</taxon>
        <taxon>Bacilli</taxon>
        <taxon>Lactobacillales</taxon>
        <taxon>Lactobacillaceae</taxon>
        <taxon>Lactiplantibacillus</taxon>
    </lineage>
</organism>
<sequence>MSTDYSSPAYLQKVDKYWRAANYLSVGQLYLKDNPLLQRPLKASDVKVHPIGHWGTIAGQNFIYAHLNRVINKYGLKMFYVEGPGHGGQVMVSNSYLDGTYTDIYPEITQDVEGMQKLFKQFSFPGGVASHAAPETPGSIHEGGELGYSISHGVGAILDNPDEIAAVVVGDGESETGPLATSWQSTKFINPINDGAVLPILNLNGFKISNPTIFGRTSDEKIKQYFESMNWEPIFVEGDDPEKVHPALAKAMDEAVEKIKAIQKNARENDDATLPVWPMIVFRAPKGWTGPKSWDGDKIEGSFRAHQIPIPVDQTDMEHADALVDWLESYQPKELFNEDGSLKDDIKEIIPTGDARMAANPITNGGVDPKALNLPNFRDYAVDTSKHGANVKQDMIVWSDYLRDVIKKNPDNFRLFGPDETMSNRLYGVFETTNRQWMEDIHPDSDQYEAPAGRVLDAQLSEHQAEGWLEGYVLTGRHGLFASYEAFLRVVDSMLTQHFKWLRKANELDWRKKYPSLNIIAASTVFQQDHNGYTHQDPGALTHLAEKKPEYIREYLPADANSLLAVGDVIFRSQEKINYVVTSKHPRQQWFSIEEAKQLVDNGLGIIDWASTDQGSEPDIVFAAAGTEPTLETLAAIQLLHDSFPDMKIRFVNVVDILKLRSPEKDPRGLSDAEFDHYFTKDKPVVFAFHGYEDLVRDIFFDRHNHNLHVHGYRENGDITTPFDVRVMNQMDRFDLAKSAIAAQPAMENTGAAFVQDMDNMLAKHNAYIRDAGTDLPEVNDWQWKGLK</sequence>
<accession>Q937F6</accession>
<proteinExistence type="evidence at protein level"/>
<reference key="1">
    <citation type="journal article" date="2002" name="Appl. Environ. Microbiol.">
        <title>Expression of the xylulose 5-phosphate phosphoketolase gene, xpkA, from Lactobacillus pentosus MD363 is induced by sugars that are fermented via the phosphoketolase pathway and is repressed by glucose mediated by CcpA and the mannose phosphoenolpyruvate phosphotransferase system.</title>
        <authorList>
            <person name="Posthuma C.C."/>
            <person name="Bader R."/>
            <person name="Engelmann R."/>
            <person name="Postma P.W."/>
            <person name="Hengstenberg W."/>
            <person name="Pouwels P.H."/>
        </authorList>
    </citation>
    <scope>NUCLEOTIDE SEQUENCE [GENOMIC DNA]</scope>
    <scope>PROTEIN SEQUENCE OF 2-32; 478-489 AND 651-659</scope>
    <scope>FUNCTION</scope>
    <source>
        <strain>MD363</strain>
    </source>
</reference>
<evidence type="ECO:0000269" key="1">
    <source>
    </source>
</evidence>
<evidence type="ECO:0000305" key="2"/>
<keyword id="KW-0903">Direct protein sequencing</keyword>
<keyword id="KW-0456">Lyase</keyword>
<keyword id="KW-0786">Thiamine pyrophosphate</keyword>